<reference key="1">
    <citation type="journal article" date="2002" name="Environ. Microbiol.">
        <title>Complete genome sequence and comparative analysis of the metabolically versatile Pseudomonas putida KT2440.</title>
        <authorList>
            <person name="Nelson K.E."/>
            <person name="Weinel C."/>
            <person name="Paulsen I.T."/>
            <person name="Dodson R.J."/>
            <person name="Hilbert H."/>
            <person name="Martins dos Santos V.A.P."/>
            <person name="Fouts D.E."/>
            <person name="Gill S.R."/>
            <person name="Pop M."/>
            <person name="Holmes M."/>
            <person name="Brinkac L.M."/>
            <person name="Beanan M.J."/>
            <person name="DeBoy R.T."/>
            <person name="Daugherty S.C."/>
            <person name="Kolonay J.F."/>
            <person name="Madupu R."/>
            <person name="Nelson W.C."/>
            <person name="White O."/>
            <person name="Peterson J.D."/>
            <person name="Khouri H.M."/>
            <person name="Hance I."/>
            <person name="Chris Lee P."/>
            <person name="Holtzapple E.K."/>
            <person name="Scanlan D."/>
            <person name="Tran K."/>
            <person name="Moazzez A."/>
            <person name="Utterback T.R."/>
            <person name="Rizzo M."/>
            <person name="Lee K."/>
            <person name="Kosack D."/>
            <person name="Moestl D."/>
            <person name="Wedler H."/>
            <person name="Lauber J."/>
            <person name="Stjepandic D."/>
            <person name="Hoheisel J."/>
            <person name="Straetz M."/>
            <person name="Heim S."/>
            <person name="Kiewitz C."/>
            <person name="Eisen J.A."/>
            <person name="Timmis K.N."/>
            <person name="Duesterhoeft A."/>
            <person name="Tuemmler B."/>
            <person name="Fraser C.M."/>
        </authorList>
    </citation>
    <scope>NUCLEOTIDE SEQUENCE [LARGE SCALE GENOMIC DNA]</scope>
    <source>
        <strain>ATCC 47054 / DSM 6125 / CFBP 8728 / NCIMB 11950 / KT2440</strain>
    </source>
</reference>
<feature type="chain" id="PRO_0000123202" description="Small ribosomal subunit protein uS11">
    <location>
        <begin position="1"/>
        <end position="129"/>
    </location>
</feature>
<sequence>MAKPAARPRKKVKKTVVDGIAHIHASFNNTIVTITDRQGNALSWATSGGSGFRGSRKSTPFAAQIAAERAGQAALEYGLKNLDVNVKGPGPGRESAVRALNSCGYKIASITDVTPIPHNGCRPPKKRRV</sequence>
<gene>
    <name evidence="1" type="primary">rpsK</name>
    <name type="ordered locus">PP_0477</name>
</gene>
<protein>
    <recommendedName>
        <fullName evidence="1">Small ribosomal subunit protein uS11</fullName>
    </recommendedName>
    <alternativeName>
        <fullName evidence="2">30S ribosomal protein S11</fullName>
    </alternativeName>
</protein>
<keyword id="KW-1185">Reference proteome</keyword>
<keyword id="KW-0687">Ribonucleoprotein</keyword>
<keyword id="KW-0689">Ribosomal protein</keyword>
<keyword id="KW-0694">RNA-binding</keyword>
<keyword id="KW-0699">rRNA-binding</keyword>
<organism>
    <name type="scientific">Pseudomonas putida (strain ATCC 47054 / DSM 6125 / CFBP 8728 / NCIMB 11950 / KT2440)</name>
    <dbReference type="NCBI Taxonomy" id="160488"/>
    <lineage>
        <taxon>Bacteria</taxon>
        <taxon>Pseudomonadati</taxon>
        <taxon>Pseudomonadota</taxon>
        <taxon>Gammaproteobacteria</taxon>
        <taxon>Pseudomonadales</taxon>
        <taxon>Pseudomonadaceae</taxon>
        <taxon>Pseudomonas</taxon>
    </lineage>
</organism>
<comment type="function">
    <text evidence="1">Located on the platform of the 30S subunit, it bridges several disparate RNA helices of the 16S rRNA. Forms part of the Shine-Dalgarno cleft in the 70S ribosome.</text>
</comment>
<comment type="subunit">
    <text evidence="1">Part of the 30S ribosomal subunit. Interacts with proteins S7 and S18. Binds to IF-3.</text>
</comment>
<comment type="similarity">
    <text evidence="1">Belongs to the universal ribosomal protein uS11 family.</text>
</comment>
<accession>P59374</accession>
<name>RS11_PSEPK</name>
<evidence type="ECO:0000255" key="1">
    <source>
        <dbReference type="HAMAP-Rule" id="MF_01310"/>
    </source>
</evidence>
<evidence type="ECO:0000305" key="2"/>
<dbReference type="EMBL" id="AE015451">
    <property type="protein sequence ID" value="AAN66107.1"/>
    <property type="molecule type" value="Genomic_DNA"/>
</dbReference>
<dbReference type="RefSeq" id="NP_742643.1">
    <property type="nucleotide sequence ID" value="NC_002947.4"/>
</dbReference>
<dbReference type="RefSeq" id="WP_003255454.1">
    <property type="nucleotide sequence ID" value="NZ_CP169744.1"/>
</dbReference>
<dbReference type="SMR" id="P59374"/>
<dbReference type="STRING" id="160488.PP_0477"/>
<dbReference type="PaxDb" id="160488-PP_0477"/>
<dbReference type="GeneID" id="97166002"/>
<dbReference type="KEGG" id="ppu:PP_0477"/>
<dbReference type="PATRIC" id="fig|160488.4.peg.509"/>
<dbReference type="eggNOG" id="COG0100">
    <property type="taxonomic scope" value="Bacteria"/>
</dbReference>
<dbReference type="HOGENOM" id="CLU_072439_5_0_6"/>
<dbReference type="OrthoDB" id="9806415at2"/>
<dbReference type="PhylomeDB" id="P59374"/>
<dbReference type="BioCyc" id="PPUT160488:G1G01-524-MONOMER"/>
<dbReference type="Proteomes" id="UP000000556">
    <property type="component" value="Chromosome"/>
</dbReference>
<dbReference type="GO" id="GO:1990904">
    <property type="term" value="C:ribonucleoprotein complex"/>
    <property type="evidence" value="ECO:0007669"/>
    <property type="project" value="UniProtKB-KW"/>
</dbReference>
<dbReference type="GO" id="GO:0005840">
    <property type="term" value="C:ribosome"/>
    <property type="evidence" value="ECO:0007669"/>
    <property type="project" value="UniProtKB-KW"/>
</dbReference>
<dbReference type="GO" id="GO:0019843">
    <property type="term" value="F:rRNA binding"/>
    <property type="evidence" value="ECO:0007669"/>
    <property type="project" value="UniProtKB-UniRule"/>
</dbReference>
<dbReference type="GO" id="GO:0003735">
    <property type="term" value="F:structural constituent of ribosome"/>
    <property type="evidence" value="ECO:0007669"/>
    <property type="project" value="InterPro"/>
</dbReference>
<dbReference type="GO" id="GO:0006412">
    <property type="term" value="P:translation"/>
    <property type="evidence" value="ECO:0007669"/>
    <property type="project" value="UniProtKB-UniRule"/>
</dbReference>
<dbReference type="FunFam" id="3.30.420.80:FF:000001">
    <property type="entry name" value="30S ribosomal protein S11"/>
    <property type="match status" value="1"/>
</dbReference>
<dbReference type="Gene3D" id="3.30.420.80">
    <property type="entry name" value="Ribosomal protein S11"/>
    <property type="match status" value="1"/>
</dbReference>
<dbReference type="HAMAP" id="MF_01310">
    <property type="entry name" value="Ribosomal_uS11"/>
    <property type="match status" value="1"/>
</dbReference>
<dbReference type="InterPro" id="IPR001971">
    <property type="entry name" value="Ribosomal_uS11"/>
</dbReference>
<dbReference type="InterPro" id="IPR019981">
    <property type="entry name" value="Ribosomal_uS11_bac-type"/>
</dbReference>
<dbReference type="InterPro" id="IPR018102">
    <property type="entry name" value="Ribosomal_uS11_CS"/>
</dbReference>
<dbReference type="InterPro" id="IPR036967">
    <property type="entry name" value="Ribosomal_uS11_sf"/>
</dbReference>
<dbReference type="NCBIfam" id="NF003698">
    <property type="entry name" value="PRK05309.1"/>
    <property type="match status" value="1"/>
</dbReference>
<dbReference type="NCBIfam" id="TIGR03632">
    <property type="entry name" value="uS11_bact"/>
    <property type="match status" value="1"/>
</dbReference>
<dbReference type="PANTHER" id="PTHR11759">
    <property type="entry name" value="40S RIBOSOMAL PROTEIN S14/30S RIBOSOMAL PROTEIN S11"/>
    <property type="match status" value="1"/>
</dbReference>
<dbReference type="Pfam" id="PF00411">
    <property type="entry name" value="Ribosomal_S11"/>
    <property type="match status" value="1"/>
</dbReference>
<dbReference type="PIRSF" id="PIRSF002131">
    <property type="entry name" value="Ribosomal_S11"/>
    <property type="match status" value="1"/>
</dbReference>
<dbReference type="SUPFAM" id="SSF53137">
    <property type="entry name" value="Translational machinery components"/>
    <property type="match status" value="1"/>
</dbReference>
<dbReference type="PROSITE" id="PS00054">
    <property type="entry name" value="RIBOSOMAL_S11"/>
    <property type="match status" value="1"/>
</dbReference>
<proteinExistence type="inferred from homology"/>